<dbReference type="EC" id="3.4.25.1" evidence="1"/>
<dbReference type="EMBL" id="CP000745">
    <property type="protein sequence ID" value="ABR66778.1"/>
    <property type="molecule type" value="Genomic_DNA"/>
</dbReference>
<dbReference type="SMR" id="A6VK02"/>
<dbReference type="STRING" id="426368.MmarC7_1722"/>
<dbReference type="MEROPS" id="T01.002"/>
<dbReference type="KEGG" id="mmz:MmarC7_1722"/>
<dbReference type="eggNOG" id="arCOG00970">
    <property type="taxonomic scope" value="Archaea"/>
</dbReference>
<dbReference type="HOGENOM" id="CLU_035750_7_2_2"/>
<dbReference type="OrthoDB" id="6330at2157"/>
<dbReference type="GO" id="GO:0005737">
    <property type="term" value="C:cytoplasm"/>
    <property type="evidence" value="ECO:0007669"/>
    <property type="project" value="UniProtKB-SubCell"/>
</dbReference>
<dbReference type="GO" id="GO:0019774">
    <property type="term" value="C:proteasome core complex, beta-subunit complex"/>
    <property type="evidence" value="ECO:0007669"/>
    <property type="project" value="UniProtKB-UniRule"/>
</dbReference>
<dbReference type="GO" id="GO:0004298">
    <property type="term" value="F:threonine-type endopeptidase activity"/>
    <property type="evidence" value="ECO:0007669"/>
    <property type="project" value="UniProtKB-UniRule"/>
</dbReference>
<dbReference type="GO" id="GO:0010498">
    <property type="term" value="P:proteasomal protein catabolic process"/>
    <property type="evidence" value="ECO:0007669"/>
    <property type="project" value="UniProtKB-UniRule"/>
</dbReference>
<dbReference type="FunFam" id="3.60.20.10:FF:000049">
    <property type="entry name" value="Proteasome subunit beta"/>
    <property type="match status" value="1"/>
</dbReference>
<dbReference type="Gene3D" id="3.60.20.10">
    <property type="entry name" value="Glutamine Phosphoribosylpyrophosphate, subunit 1, domain 1"/>
    <property type="match status" value="1"/>
</dbReference>
<dbReference type="HAMAP" id="MF_02113_A">
    <property type="entry name" value="Proteasome_B_A"/>
    <property type="match status" value="1"/>
</dbReference>
<dbReference type="InterPro" id="IPR029055">
    <property type="entry name" value="Ntn_hydrolases_N"/>
</dbReference>
<dbReference type="InterPro" id="IPR019983">
    <property type="entry name" value="Pept_T1A_Psome_bsu_arc"/>
</dbReference>
<dbReference type="InterPro" id="IPR000243">
    <property type="entry name" value="Pept_T1A_subB"/>
</dbReference>
<dbReference type="InterPro" id="IPR016050">
    <property type="entry name" value="Proteasome_bsu_CS"/>
</dbReference>
<dbReference type="InterPro" id="IPR001353">
    <property type="entry name" value="Proteasome_sua/b"/>
</dbReference>
<dbReference type="InterPro" id="IPR023333">
    <property type="entry name" value="Proteasome_suB-type"/>
</dbReference>
<dbReference type="NCBIfam" id="TIGR03634">
    <property type="entry name" value="arc_protsome_B"/>
    <property type="match status" value="1"/>
</dbReference>
<dbReference type="PANTHER" id="PTHR32194:SF0">
    <property type="entry name" value="ATP-DEPENDENT PROTEASE SUBUNIT HSLV"/>
    <property type="match status" value="1"/>
</dbReference>
<dbReference type="PANTHER" id="PTHR32194">
    <property type="entry name" value="METALLOPROTEASE TLDD"/>
    <property type="match status" value="1"/>
</dbReference>
<dbReference type="Pfam" id="PF00227">
    <property type="entry name" value="Proteasome"/>
    <property type="match status" value="1"/>
</dbReference>
<dbReference type="PRINTS" id="PR00141">
    <property type="entry name" value="PROTEASOME"/>
</dbReference>
<dbReference type="SUPFAM" id="SSF56235">
    <property type="entry name" value="N-terminal nucleophile aminohydrolases (Ntn hydrolases)"/>
    <property type="match status" value="1"/>
</dbReference>
<dbReference type="PROSITE" id="PS00854">
    <property type="entry name" value="PROTEASOME_BETA_1"/>
    <property type="match status" value="1"/>
</dbReference>
<dbReference type="PROSITE" id="PS51476">
    <property type="entry name" value="PROTEASOME_BETA_2"/>
    <property type="match status" value="1"/>
</dbReference>
<reference key="1">
    <citation type="submission" date="2007-06" db="EMBL/GenBank/DDBJ databases">
        <title>Complete sequence of Methanococcus maripaludis C7.</title>
        <authorList>
            <consortium name="US DOE Joint Genome Institute"/>
            <person name="Copeland A."/>
            <person name="Lucas S."/>
            <person name="Lapidus A."/>
            <person name="Barry K."/>
            <person name="Glavina del Rio T."/>
            <person name="Dalin E."/>
            <person name="Tice H."/>
            <person name="Pitluck S."/>
            <person name="Clum A."/>
            <person name="Schmutz J."/>
            <person name="Larimer F."/>
            <person name="Land M."/>
            <person name="Hauser L."/>
            <person name="Kyrpides N."/>
            <person name="Anderson I."/>
            <person name="Sieprawska-Lupa M."/>
            <person name="Whitman W.B."/>
            <person name="Richardson P."/>
        </authorList>
    </citation>
    <scope>NUCLEOTIDE SEQUENCE [LARGE SCALE GENOMIC DNA]</scope>
    <source>
        <strain>C7 / ATCC BAA-1331</strain>
    </source>
</reference>
<gene>
    <name evidence="1" type="primary">psmB</name>
    <name type="ordered locus">MmarC7_1722</name>
</gene>
<sequence length="219" mass="23678">MISNSEYHKEYMKGTTTVGLLCKDGVVLATDKRATMGNLIADKEAKKLYKIDDYIAMTIAGSVGDAQSLIRLISAEAKIYKMRTGNNMTPLSCTTLISNVLHGNRHYPLLTQLILGGYDLINGAKLFSLDPVGGINEESSFTATGSGSPTAYGVLEAEYRSDVTIDKGLLVAVKALSSAMQRDAYSGNGISLAHINKDGVNIYSDEEIEGFLKKINKKR</sequence>
<protein>
    <recommendedName>
        <fullName evidence="1">Proteasome subunit beta</fullName>
        <ecNumber evidence="1">3.4.25.1</ecNumber>
    </recommendedName>
    <alternativeName>
        <fullName evidence="1">20S proteasome beta subunit</fullName>
    </alternativeName>
    <alternativeName>
        <fullName evidence="1">Proteasome core protein PsmB</fullName>
    </alternativeName>
</protein>
<feature type="propeptide" id="PRO_0000397352" description="Removed in mature form; by autocatalysis" evidence="1">
    <location>
        <begin position="1"/>
        <end position="14"/>
    </location>
</feature>
<feature type="chain" id="PRO_0000397353" description="Proteasome subunit beta">
    <location>
        <begin position="15"/>
        <end position="219"/>
    </location>
</feature>
<feature type="active site" description="Nucleophile" evidence="1">
    <location>
        <position position="15"/>
    </location>
</feature>
<keyword id="KW-0068">Autocatalytic cleavage</keyword>
<keyword id="KW-0963">Cytoplasm</keyword>
<keyword id="KW-0378">Hydrolase</keyword>
<keyword id="KW-0645">Protease</keyword>
<keyword id="KW-0647">Proteasome</keyword>
<keyword id="KW-0888">Threonine protease</keyword>
<keyword id="KW-0865">Zymogen</keyword>
<organism>
    <name type="scientific">Methanococcus maripaludis (strain C7 / ATCC BAA-1331)</name>
    <dbReference type="NCBI Taxonomy" id="426368"/>
    <lineage>
        <taxon>Archaea</taxon>
        <taxon>Methanobacteriati</taxon>
        <taxon>Methanobacteriota</taxon>
        <taxon>Methanomada group</taxon>
        <taxon>Methanococci</taxon>
        <taxon>Methanococcales</taxon>
        <taxon>Methanococcaceae</taxon>
        <taxon>Methanococcus</taxon>
    </lineage>
</organism>
<evidence type="ECO:0000255" key="1">
    <source>
        <dbReference type="HAMAP-Rule" id="MF_02113"/>
    </source>
</evidence>
<proteinExistence type="inferred from homology"/>
<accession>A6VK02</accession>
<comment type="function">
    <text evidence="1">Component of the proteasome core, a large protease complex with broad specificity involved in protein degradation.</text>
</comment>
<comment type="catalytic activity">
    <reaction evidence="1">
        <text>Cleavage of peptide bonds with very broad specificity.</text>
        <dbReference type="EC" id="3.4.25.1"/>
    </reaction>
</comment>
<comment type="activity regulation">
    <text evidence="1">The formation of the proteasomal ATPase PAN-20S proteasome complex, via the docking of the C-termini of PAN into the intersubunit pockets in the alpha-rings, triggers opening of the gate for substrate entry. Interconversion between the open-gate and close-gate conformations leads to a dynamic regulation of the 20S proteasome proteolysis activity.</text>
</comment>
<comment type="subunit">
    <text evidence="1">The 20S proteasome core is composed of 14 alpha and 14 beta subunits that assemble into four stacked heptameric rings, resulting in a barrel-shaped structure. The two inner rings, each composed of seven catalytic beta subunits, are sandwiched by two outer rings, each composed of seven alpha subunits. The catalytic chamber with the active sites is on the inside of the barrel. Has a gated structure, the ends of the cylinder being occluded by the N-termini of the alpha-subunits. Is capped at one or both ends by the proteasome regulatory ATPase, PAN.</text>
</comment>
<comment type="subcellular location">
    <subcellularLocation>
        <location evidence="1">Cytoplasm</location>
    </subcellularLocation>
</comment>
<comment type="similarity">
    <text evidence="1">Belongs to the peptidase T1B family.</text>
</comment>
<name>PSB_METM7</name>